<feature type="chain" id="PRO_1000086436" description="Large ribosomal subunit protein uL3">
    <location>
        <begin position="1"/>
        <end position="217"/>
    </location>
</feature>
<feature type="region of interest" description="Disordered" evidence="2">
    <location>
        <begin position="134"/>
        <end position="154"/>
    </location>
</feature>
<feature type="modified residue" description="N5-methylglutamine" evidence="1">
    <location>
        <position position="153"/>
    </location>
</feature>
<proteinExistence type="inferred from homology"/>
<accession>A9KD31</accession>
<reference key="1">
    <citation type="journal article" date="2009" name="Infect. Immun.">
        <title>Comparative genomics reveal extensive transposon-mediated genomic plasticity and diversity among potential effector proteins within the genus Coxiella.</title>
        <authorList>
            <person name="Beare P.A."/>
            <person name="Unsworth N."/>
            <person name="Andoh M."/>
            <person name="Voth D.E."/>
            <person name="Omsland A."/>
            <person name="Gilk S.D."/>
            <person name="Williams K.P."/>
            <person name="Sobral B.W."/>
            <person name="Kupko J.J. III"/>
            <person name="Porcella S.F."/>
            <person name="Samuel J.E."/>
            <person name="Heinzen R.A."/>
        </authorList>
    </citation>
    <scope>NUCLEOTIDE SEQUENCE [LARGE SCALE GENOMIC DNA]</scope>
    <source>
        <strain>Dugway 5J108-111</strain>
    </source>
</reference>
<comment type="function">
    <text evidence="1">One of the primary rRNA binding proteins, it binds directly near the 3'-end of the 23S rRNA, where it nucleates assembly of the 50S subunit.</text>
</comment>
<comment type="subunit">
    <text evidence="1">Part of the 50S ribosomal subunit. Forms a cluster with proteins L14 and L19.</text>
</comment>
<comment type="PTM">
    <text evidence="1">Methylated by PrmB.</text>
</comment>
<comment type="similarity">
    <text evidence="1">Belongs to the universal ribosomal protein uL3 family.</text>
</comment>
<gene>
    <name evidence="1" type="primary">rplC</name>
    <name type="ordered locus">CBUD_1854</name>
</gene>
<evidence type="ECO:0000255" key="1">
    <source>
        <dbReference type="HAMAP-Rule" id="MF_01325"/>
    </source>
</evidence>
<evidence type="ECO:0000256" key="2">
    <source>
        <dbReference type="SAM" id="MobiDB-lite"/>
    </source>
</evidence>
<evidence type="ECO:0000305" key="3"/>
<keyword id="KW-0488">Methylation</keyword>
<keyword id="KW-0687">Ribonucleoprotein</keyword>
<keyword id="KW-0689">Ribosomal protein</keyword>
<keyword id="KW-0694">RNA-binding</keyword>
<keyword id="KW-0699">rRNA-binding</keyword>
<sequence length="217" mass="23473">MSIGLIGRKCGMTRIFTETGSSIPVTVVEVIPNRITQVKTVETDGYRAFQVAYGKKSSARVNKPLAGHYSKAAVEAGNALREFRLGNEELTEAKAGDELKVDIFKEGQVVDVRGLTRGKGFAGTVKHHNFRTQDATHGNSLSHRAPGSIGQCQTPGRVWKGKKMAGQLGNVYCTVQSQEIIKVDVERNLLLIKGALPGAPGGEVIITQSSKKRKEDK</sequence>
<dbReference type="EMBL" id="CP000733">
    <property type="protein sequence ID" value="ABS76900.1"/>
    <property type="molecule type" value="Genomic_DNA"/>
</dbReference>
<dbReference type="RefSeq" id="WP_011997290.1">
    <property type="nucleotide sequence ID" value="NC_009727.1"/>
</dbReference>
<dbReference type="SMR" id="A9KD31"/>
<dbReference type="KEGG" id="cbd:CBUD_1854"/>
<dbReference type="HOGENOM" id="CLU_044142_4_1_6"/>
<dbReference type="Proteomes" id="UP000008555">
    <property type="component" value="Chromosome"/>
</dbReference>
<dbReference type="GO" id="GO:0022625">
    <property type="term" value="C:cytosolic large ribosomal subunit"/>
    <property type="evidence" value="ECO:0007669"/>
    <property type="project" value="TreeGrafter"/>
</dbReference>
<dbReference type="GO" id="GO:0019843">
    <property type="term" value="F:rRNA binding"/>
    <property type="evidence" value="ECO:0007669"/>
    <property type="project" value="UniProtKB-UniRule"/>
</dbReference>
<dbReference type="GO" id="GO:0003735">
    <property type="term" value="F:structural constituent of ribosome"/>
    <property type="evidence" value="ECO:0007669"/>
    <property type="project" value="InterPro"/>
</dbReference>
<dbReference type="GO" id="GO:0006412">
    <property type="term" value="P:translation"/>
    <property type="evidence" value="ECO:0007669"/>
    <property type="project" value="UniProtKB-UniRule"/>
</dbReference>
<dbReference type="FunFam" id="2.40.30.10:FF:000004">
    <property type="entry name" value="50S ribosomal protein L3"/>
    <property type="match status" value="1"/>
</dbReference>
<dbReference type="FunFam" id="3.30.160.810:FF:000001">
    <property type="entry name" value="50S ribosomal protein L3"/>
    <property type="match status" value="1"/>
</dbReference>
<dbReference type="Gene3D" id="3.30.160.810">
    <property type="match status" value="1"/>
</dbReference>
<dbReference type="Gene3D" id="2.40.30.10">
    <property type="entry name" value="Translation factors"/>
    <property type="match status" value="1"/>
</dbReference>
<dbReference type="HAMAP" id="MF_01325_B">
    <property type="entry name" value="Ribosomal_uL3_B"/>
    <property type="match status" value="1"/>
</dbReference>
<dbReference type="InterPro" id="IPR000597">
    <property type="entry name" value="Ribosomal_uL3"/>
</dbReference>
<dbReference type="InterPro" id="IPR019927">
    <property type="entry name" value="Ribosomal_uL3_bac/org-type"/>
</dbReference>
<dbReference type="InterPro" id="IPR009000">
    <property type="entry name" value="Transl_B-barrel_sf"/>
</dbReference>
<dbReference type="NCBIfam" id="TIGR03625">
    <property type="entry name" value="L3_bact"/>
    <property type="match status" value="1"/>
</dbReference>
<dbReference type="PANTHER" id="PTHR11229">
    <property type="entry name" value="50S RIBOSOMAL PROTEIN L3"/>
    <property type="match status" value="1"/>
</dbReference>
<dbReference type="PANTHER" id="PTHR11229:SF16">
    <property type="entry name" value="LARGE RIBOSOMAL SUBUNIT PROTEIN UL3C"/>
    <property type="match status" value="1"/>
</dbReference>
<dbReference type="Pfam" id="PF00297">
    <property type="entry name" value="Ribosomal_L3"/>
    <property type="match status" value="1"/>
</dbReference>
<dbReference type="SUPFAM" id="SSF50447">
    <property type="entry name" value="Translation proteins"/>
    <property type="match status" value="1"/>
</dbReference>
<organism>
    <name type="scientific">Coxiella burnetii (strain Dugway 5J108-111)</name>
    <dbReference type="NCBI Taxonomy" id="434922"/>
    <lineage>
        <taxon>Bacteria</taxon>
        <taxon>Pseudomonadati</taxon>
        <taxon>Pseudomonadota</taxon>
        <taxon>Gammaproteobacteria</taxon>
        <taxon>Legionellales</taxon>
        <taxon>Coxiellaceae</taxon>
        <taxon>Coxiella</taxon>
    </lineage>
</organism>
<name>RL3_COXBN</name>
<protein>
    <recommendedName>
        <fullName evidence="1">Large ribosomal subunit protein uL3</fullName>
    </recommendedName>
    <alternativeName>
        <fullName evidence="3">50S ribosomal protein L3</fullName>
    </alternativeName>
</protein>